<sequence>MGRMWASEVLLLLLLGSSRAVTPGLDVSTAPGLDGSIPPGLDGSVSPGLDGSVSPGLDGSASPGLDGSVSPGLDGSASPGLDGSTPAGRDGTITPKLEGTITPKQDGSISPSWPWRWPITYLDAILAAVRLLNQKISGPCILRLREAQPRPGWVGTLQRRREVSFLVEDGPCPPGVDCRSCEPGALQHCVGTVSIEQQPTAELRCRPLRPQPIRNWWIRIWEWLNGIRKRLRQRSPFYVRGHLNVTSTPQP</sequence>
<reference key="1">
    <citation type="journal article" date="2007" name="Proc. Natl. Acad. Sci. U.S.A.">
        <title>Chicken cathelicidin-B1, an antimicrobial guardian at the mucosal M cell gateway.</title>
        <authorList>
            <person name="Goitsuka R."/>
            <person name="Chen C.-I.H."/>
            <person name="Benyon L."/>
            <person name="Asano Y."/>
            <person name="Kitamura D."/>
            <person name="Cooper M.D."/>
        </authorList>
    </citation>
    <scope>NUCLEOTIDE SEQUENCE [GENOMIC DNA / MRNA]</scope>
    <scope>FUNCTION</scope>
    <scope>SUBCELLULAR LOCATION</scope>
    <scope>TISSUE SPECIFICITY</scope>
    <source>
        <tissue>Bursa of Fabricius</tissue>
    </source>
</reference>
<reference key="2">
    <citation type="journal article" date="2005" name="Genome Biol.">
        <title>Full-length cDNAs from chicken bursal lymphocytes to facilitate gene function analysis.</title>
        <authorList>
            <person name="Caldwell R.B."/>
            <person name="Kierzek A.M."/>
            <person name="Arakawa H."/>
            <person name="Bezzubov Y."/>
            <person name="Zaim J."/>
            <person name="Fiedler P."/>
            <person name="Kutter S."/>
            <person name="Blagodatski A."/>
            <person name="Kostovska D."/>
            <person name="Koter M."/>
            <person name="Plachy J."/>
            <person name="Carninci P."/>
            <person name="Hayashizaki Y."/>
            <person name="Buerstedde J.-M."/>
        </authorList>
    </citation>
    <scope>NUCLEOTIDE SEQUENCE [LARGE SCALE MRNA]</scope>
    <source>
        <strain>CB</strain>
        <tissue>Bursa of Fabricius</tissue>
    </source>
</reference>
<proteinExistence type="evidence at protein level"/>
<feature type="signal peptide" evidence="2">
    <location>
        <begin position="1"/>
        <end position="20"/>
    </location>
</feature>
<feature type="propeptide" id="PRO_0000333226" evidence="2">
    <location>
        <begin position="21"/>
        <end position="211"/>
    </location>
</feature>
<feature type="peptide" id="PRO_0000333227" description="Cathelicidin-B1">
    <location>
        <begin position="212"/>
        <end position="251"/>
    </location>
</feature>
<feature type="region of interest" description="Disordered" evidence="3">
    <location>
        <begin position="29"/>
        <end position="109"/>
    </location>
</feature>
<feature type="disulfide bond" evidence="1">
    <location>
        <begin position="172"/>
        <end position="181"/>
    </location>
</feature>
<feature type="disulfide bond" evidence="1">
    <location>
        <begin position="189"/>
        <end position="205"/>
    </location>
</feature>
<feature type="sequence conflict" description="In Ref. 1; BAF75953/BAF75951." evidence="5" ref="1">
    <original>A</original>
    <variation>ASPGLDGST</variation>
    <location>
        <position position="77"/>
    </location>
</feature>
<feature type="sequence conflict" description="In Ref. 1; BAF75953/BAF75951." evidence="5" ref="1">
    <original>K</original>
    <variation>R</variation>
    <location>
        <position position="135"/>
    </location>
</feature>
<protein>
    <recommendedName>
        <fullName>Cathelicidin-B1</fullName>
        <shortName>CATH-B1</shortName>
    </recommendedName>
</protein>
<name>CTHB1_CHICK</name>
<dbReference type="EMBL" id="AB307733">
    <property type="protein sequence ID" value="BAF75951.1"/>
    <property type="molecule type" value="mRNA"/>
</dbReference>
<dbReference type="EMBL" id="AB308318">
    <property type="protein sequence ID" value="BAF75953.1"/>
    <property type="molecule type" value="Genomic_DNA"/>
</dbReference>
<dbReference type="EMBL" id="AJ851772">
    <property type="protein sequence ID" value="CAH65406.1"/>
    <property type="molecule type" value="mRNA"/>
</dbReference>
<dbReference type="RefSeq" id="NP_001258101.1">
    <property type="nucleotide sequence ID" value="NM_001271172.1"/>
</dbReference>
<dbReference type="SMR" id="Q5F378"/>
<dbReference type="STRING" id="9031.ENSGALP00000042265"/>
<dbReference type="TCDB" id="1.C.33.1.8">
    <property type="family name" value="the cathelicidin (cathelicidin) family"/>
</dbReference>
<dbReference type="GlyGen" id="Q5F378">
    <property type="glycosylation" value="1 site"/>
</dbReference>
<dbReference type="PaxDb" id="9031-ENSGALP00000042265"/>
<dbReference type="GeneID" id="100858412"/>
<dbReference type="KEGG" id="gga:100858412"/>
<dbReference type="CTD" id="100858412"/>
<dbReference type="VEuPathDB" id="HostDB:geneid_100858412"/>
<dbReference type="eggNOG" id="ENOG502TDFH">
    <property type="taxonomic scope" value="Eukaryota"/>
</dbReference>
<dbReference type="InParanoid" id="Q5F378"/>
<dbReference type="OrthoDB" id="9204597at2759"/>
<dbReference type="PRO" id="PR:Q5F378"/>
<dbReference type="Proteomes" id="UP000000539">
    <property type="component" value="Unassembled WGS sequence"/>
</dbReference>
<dbReference type="GO" id="GO:0005615">
    <property type="term" value="C:extracellular space"/>
    <property type="evidence" value="ECO:0000318"/>
    <property type="project" value="GO_Central"/>
</dbReference>
<dbReference type="GO" id="GO:0099512">
    <property type="term" value="C:supramolecular fiber"/>
    <property type="evidence" value="ECO:0000315"/>
    <property type="project" value="AgBase"/>
</dbReference>
<dbReference type="GO" id="GO:0001530">
    <property type="term" value="F:lipopolysaccharide binding"/>
    <property type="evidence" value="ECO:0000318"/>
    <property type="project" value="GO_Central"/>
</dbReference>
<dbReference type="GO" id="GO:0061844">
    <property type="term" value="P:antimicrobial humoral immune response mediated by antimicrobial peptide"/>
    <property type="evidence" value="ECO:0000318"/>
    <property type="project" value="GO_Central"/>
</dbReference>
<dbReference type="GO" id="GO:0050829">
    <property type="term" value="P:defense response to Gram-negative bacterium"/>
    <property type="evidence" value="ECO:0000315"/>
    <property type="project" value="AgBase"/>
</dbReference>
<dbReference type="GO" id="GO:0050830">
    <property type="term" value="P:defense response to Gram-positive bacterium"/>
    <property type="evidence" value="ECO:0000315"/>
    <property type="project" value="AgBase"/>
</dbReference>
<dbReference type="GO" id="GO:0045087">
    <property type="term" value="P:innate immune response"/>
    <property type="evidence" value="ECO:0000318"/>
    <property type="project" value="GO_Central"/>
</dbReference>
<dbReference type="FunFam" id="3.10.450.10:FF:000034">
    <property type="entry name" value="Cathelicidin-related peptide Oh-Cath"/>
    <property type="match status" value="1"/>
</dbReference>
<dbReference type="Gene3D" id="3.10.450.10">
    <property type="match status" value="1"/>
</dbReference>
<dbReference type="InterPro" id="IPR001894">
    <property type="entry name" value="Cathelicidin-like"/>
</dbReference>
<dbReference type="InterPro" id="IPR046350">
    <property type="entry name" value="Cystatin_sf"/>
</dbReference>
<dbReference type="PANTHER" id="PTHR10206">
    <property type="entry name" value="CATHELICIDIN"/>
    <property type="match status" value="1"/>
</dbReference>
<dbReference type="PANTHER" id="PTHR10206:SF0">
    <property type="entry name" value="CATHELICIDIN B1-RELATED"/>
    <property type="match status" value="1"/>
</dbReference>
<dbReference type="Pfam" id="PF00666">
    <property type="entry name" value="Cathelicidins"/>
    <property type="match status" value="1"/>
</dbReference>
<dbReference type="SUPFAM" id="SSF54403">
    <property type="entry name" value="Cystatin/monellin"/>
    <property type="match status" value="1"/>
</dbReference>
<accession>Q5F378</accession>
<accession>A7M6V2</accession>
<keyword id="KW-0044">Antibiotic</keyword>
<keyword id="KW-0929">Antimicrobial</keyword>
<keyword id="KW-1015">Disulfide bond</keyword>
<keyword id="KW-0391">Immunity</keyword>
<keyword id="KW-0399">Innate immunity</keyword>
<keyword id="KW-1185">Reference proteome</keyword>
<keyword id="KW-0964">Secreted</keyword>
<keyword id="KW-0732">Signal</keyword>
<evidence type="ECO:0000250" key="1"/>
<evidence type="ECO:0000255" key="2"/>
<evidence type="ECO:0000256" key="3">
    <source>
        <dbReference type="SAM" id="MobiDB-lite"/>
    </source>
</evidence>
<evidence type="ECO:0000269" key="4">
    <source>
    </source>
</evidence>
<evidence type="ECO:0000305" key="5"/>
<comment type="function">
    <text evidence="4">Has potent antimicrobial activity against Gram-positive and Gram-negative bacteria (in vitro). May play a role in the innate immune response.</text>
</comment>
<comment type="subcellular location">
    <subcellularLocation>
        <location evidence="4">Secreted</location>
    </subcellularLocation>
</comment>
<comment type="tissue specificity">
    <text evidence="4">Detected in bursa of Fabricius, in filamentous structures surrounding the basal and lateral surfaces of bursal M cells (at protein level). Detected in bursa of Fabricius, in secretory enterocytes of the interfollicular bursal epithelium, but not in M cells.</text>
</comment>
<comment type="similarity">
    <text evidence="5">Belongs to the cathelicidin family.</text>
</comment>
<organism>
    <name type="scientific">Gallus gallus</name>
    <name type="common">Chicken</name>
    <dbReference type="NCBI Taxonomy" id="9031"/>
    <lineage>
        <taxon>Eukaryota</taxon>
        <taxon>Metazoa</taxon>
        <taxon>Chordata</taxon>
        <taxon>Craniata</taxon>
        <taxon>Vertebrata</taxon>
        <taxon>Euteleostomi</taxon>
        <taxon>Archelosauria</taxon>
        <taxon>Archosauria</taxon>
        <taxon>Dinosauria</taxon>
        <taxon>Saurischia</taxon>
        <taxon>Theropoda</taxon>
        <taxon>Coelurosauria</taxon>
        <taxon>Aves</taxon>
        <taxon>Neognathae</taxon>
        <taxon>Galloanserae</taxon>
        <taxon>Galliformes</taxon>
        <taxon>Phasianidae</taxon>
        <taxon>Phasianinae</taxon>
        <taxon>Gallus</taxon>
    </lineage>
</organism>
<gene>
    <name type="primary">CATHB1</name>
    <name type="ORF">RCJMB04_29o22</name>
</gene>